<feature type="chain" id="PRO_1000016549" description="tRNA uridine 5-carboxymethylaminomethyl modification enzyme MnmG">
    <location>
        <begin position="1"/>
        <end position="629"/>
    </location>
</feature>
<feature type="binding site" evidence="1">
    <location>
        <begin position="14"/>
        <end position="19"/>
    </location>
    <ligand>
        <name>FAD</name>
        <dbReference type="ChEBI" id="CHEBI:57692"/>
    </ligand>
</feature>
<feature type="binding site" evidence="1">
    <location>
        <position position="126"/>
    </location>
    <ligand>
        <name>FAD</name>
        <dbReference type="ChEBI" id="CHEBI:57692"/>
    </ligand>
</feature>
<feature type="binding site" evidence="1">
    <location>
        <position position="181"/>
    </location>
    <ligand>
        <name>FAD</name>
        <dbReference type="ChEBI" id="CHEBI:57692"/>
    </ligand>
</feature>
<feature type="binding site" evidence="1">
    <location>
        <begin position="273"/>
        <end position="287"/>
    </location>
    <ligand>
        <name>NAD(+)</name>
        <dbReference type="ChEBI" id="CHEBI:57540"/>
    </ligand>
</feature>
<feature type="binding site" evidence="1">
    <location>
        <position position="370"/>
    </location>
    <ligand>
        <name>FAD</name>
        <dbReference type="ChEBI" id="CHEBI:57692"/>
    </ligand>
</feature>
<name>MNMG_BACCZ</name>
<comment type="function">
    <text evidence="1">NAD-binding protein involved in the addition of a carboxymethylaminomethyl (cmnm) group at the wobble position (U34) of certain tRNAs, forming tRNA-cmnm(5)s(2)U34.</text>
</comment>
<comment type="cofactor">
    <cofactor evidence="1">
        <name>FAD</name>
        <dbReference type="ChEBI" id="CHEBI:57692"/>
    </cofactor>
</comment>
<comment type="subunit">
    <text evidence="1">Homodimer. Heterotetramer of two MnmE and two MnmG subunits.</text>
</comment>
<comment type="subcellular location">
    <subcellularLocation>
        <location evidence="1">Cytoplasm</location>
    </subcellularLocation>
</comment>
<comment type="similarity">
    <text evidence="1">Belongs to the MnmG family.</text>
</comment>
<keyword id="KW-0963">Cytoplasm</keyword>
<keyword id="KW-0274">FAD</keyword>
<keyword id="KW-0285">Flavoprotein</keyword>
<keyword id="KW-0520">NAD</keyword>
<keyword id="KW-0819">tRNA processing</keyword>
<proteinExistence type="inferred from homology"/>
<dbReference type="EMBL" id="CP000001">
    <property type="protein sequence ID" value="AAU20310.1"/>
    <property type="molecule type" value="Genomic_DNA"/>
</dbReference>
<dbReference type="RefSeq" id="WP_000541036.1">
    <property type="nucleotide sequence ID" value="NZ_CP009968.1"/>
</dbReference>
<dbReference type="SMR" id="Q630B9"/>
<dbReference type="KEGG" id="bcz:BCE33L5180"/>
<dbReference type="PATRIC" id="fig|288681.22.peg.161"/>
<dbReference type="Proteomes" id="UP000002612">
    <property type="component" value="Chromosome"/>
</dbReference>
<dbReference type="GO" id="GO:0005829">
    <property type="term" value="C:cytosol"/>
    <property type="evidence" value="ECO:0007669"/>
    <property type="project" value="TreeGrafter"/>
</dbReference>
<dbReference type="GO" id="GO:0050660">
    <property type="term" value="F:flavin adenine dinucleotide binding"/>
    <property type="evidence" value="ECO:0007669"/>
    <property type="project" value="UniProtKB-UniRule"/>
</dbReference>
<dbReference type="GO" id="GO:0030488">
    <property type="term" value="P:tRNA methylation"/>
    <property type="evidence" value="ECO:0007669"/>
    <property type="project" value="TreeGrafter"/>
</dbReference>
<dbReference type="GO" id="GO:0002098">
    <property type="term" value="P:tRNA wobble uridine modification"/>
    <property type="evidence" value="ECO:0007669"/>
    <property type="project" value="InterPro"/>
</dbReference>
<dbReference type="FunFam" id="1.10.10.1800:FF:000001">
    <property type="entry name" value="tRNA uridine 5-carboxymethylaminomethyl modification enzyme MnmG"/>
    <property type="match status" value="1"/>
</dbReference>
<dbReference type="FunFam" id="1.10.150.570:FF:000001">
    <property type="entry name" value="tRNA uridine 5-carboxymethylaminomethyl modification enzyme MnmG"/>
    <property type="match status" value="1"/>
</dbReference>
<dbReference type="FunFam" id="3.50.50.60:FF:000002">
    <property type="entry name" value="tRNA uridine 5-carboxymethylaminomethyl modification enzyme MnmG"/>
    <property type="match status" value="1"/>
</dbReference>
<dbReference type="FunFam" id="3.50.50.60:FF:000063">
    <property type="entry name" value="tRNA uridine 5-carboxymethylaminomethyl modification enzyme MnmG"/>
    <property type="match status" value="1"/>
</dbReference>
<dbReference type="Gene3D" id="3.50.50.60">
    <property type="entry name" value="FAD/NAD(P)-binding domain"/>
    <property type="match status" value="2"/>
</dbReference>
<dbReference type="Gene3D" id="1.10.150.570">
    <property type="entry name" value="GidA associated domain, C-terminal subdomain"/>
    <property type="match status" value="1"/>
</dbReference>
<dbReference type="Gene3D" id="1.10.10.1800">
    <property type="entry name" value="tRNA uridine 5-carboxymethylaminomethyl modification enzyme MnmG/GidA"/>
    <property type="match status" value="1"/>
</dbReference>
<dbReference type="HAMAP" id="MF_00129">
    <property type="entry name" value="MnmG_GidA"/>
    <property type="match status" value="1"/>
</dbReference>
<dbReference type="InterPro" id="IPR036188">
    <property type="entry name" value="FAD/NAD-bd_sf"/>
</dbReference>
<dbReference type="InterPro" id="IPR049312">
    <property type="entry name" value="GIDA_C_N"/>
</dbReference>
<dbReference type="InterPro" id="IPR004416">
    <property type="entry name" value="MnmG"/>
</dbReference>
<dbReference type="InterPro" id="IPR002218">
    <property type="entry name" value="MnmG-rel"/>
</dbReference>
<dbReference type="InterPro" id="IPR020595">
    <property type="entry name" value="MnmG-rel_CS"/>
</dbReference>
<dbReference type="InterPro" id="IPR026904">
    <property type="entry name" value="MnmG_C"/>
</dbReference>
<dbReference type="InterPro" id="IPR047001">
    <property type="entry name" value="MnmG_C_subdom"/>
</dbReference>
<dbReference type="InterPro" id="IPR044920">
    <property type="entry name" value="MnmG_C_subdom_sf"/>
</dbReference>
<dbReference type="InterPro" id="IPR040131">
    <property type="entry name" value="MnmG_N"/>
</dbReference>
<dbReference type="NCBIfam" id="TIGR00136">
    <property type="entry name" value="mnmG_gidA"/>
    <property type="match status" value="1"/>
</dbReference>
<dbReference type="PANTHER" id="PTHR11806">
    <property type="entry name" value="GLUCOSE INHIBITED DIVISION PROTEIN A"/>
    <property type="match status" value="1"/>
</dbReference>
<dbReference type="PANTHER" id="PTHR11806:SF0">
    <property type="entry name" value="PROTEIN MTO1 HOMOLOG, MITOCHONDRIAL"/>
    <property type="match status" value="1"/>
</dbReference>
<dbReference type="Pfam" id="PF01134">
    <property type="entry name" value="GIDA"/>
    <property type="match status" value="1"/>
</dbReference>
<dbReference type="Pfam" id="PF21680">
    <property type="entry name" value="GIDA_C_1st"/>
    <property type="match status" value="1"/>
</dbReference>
<dbReference type="Pfam" id="PF13932">
    <property type="entry name" value="SAM_GIDA_C"/>
    <property type="match status" value="1"/>
</dbReference>
<dbReference type="PRINTS" id="PR00411">
    <property type="entry name" value="PNDRDTASEI"/>
</dbReference>
<dbReference type="SMART" id="SM01228">
    <property type="entry name" value="GIDA_assoc_3"/>
    <property type="match status" value="1"/>
</dbReference>
<dbReference type="SUPFAM" id="SSF51905">
    <property type="entry name" value="FAD/NAD(P)-binding domain"/>
    <property type="match status" value="1"/>
</dbReference>
<dbReference type="PROSITE" id="PS01280">
    <property type="entry name" value="GIDA_1"/>
    <property type="match status" value="1"/>
</dbReference>
<dbReference type="PROSITE" id="PS01281">
    <property type="entry name" value="GIDA_2"/>
    <property type="match status" value="1"/>
</dbReference>
<evidence type="ECO:0000255" key="1">
    <source>
        <dbReference type="HAMAP-Rule" id="MF_00129"/>
    </source>
</evidence>
<sequence>MGYNAGSYDVIVIGAGHAGCEAGLAAARMGSKTLMLTINLDMVAFMPCNPSVGGPAKGIVVREIDALGGEMGRNIDKTHIQMRMLNTGKGPAVRALRAQADKFSYQHELKKTIEETPNLTLFQGMVERLIVEDGECKGVITQAGAEYTAKTVVITTGTFLRGEIIMGDLKYSSGPNNQQPSITLSEHLEELGFDLVRFKTGTPPRVNSNTIDYSKTEIQPGDDKPRAFSFETTKFIMDQIPCWLTYTSTETHRLIDENLHRSAMYSGMIKGTGPRYCPSIEDKVVRFNDKPRHQIFLEPEGRNTQEVYVQGLSTSLPEDVQRDMLRTIPGLENVEMMRTGYAIEYDAIVPTQLWPTLETKKIKNLYTAGQINGTSGYEEAAGQGLMAGINAACRSLGKKEVILGREDAYIGVLIDDLVTKGTNEPYRLLTSRAEYRLLLRHDNADLRLTEIGREIGLITEERYERFTNKKLQIEQEKERLSSIIIKPRPEVQELIRNIGGSELKDGIRASDLLRRPEMTYEHIHLLVPSEVELSDEVKEQVEIQIKYEGYIEKSLQQVERMKKMENKKIPVDIDYDAISSLASEARQKLKDVRPLSMGQASRISGVNPADISILLVYIEQGKIARVSNQ</sequence>
<protein>
    <recommendedName>
        <fullName evidence="1">tRNA uridine 5-carboxymethylaminomethyl modification enzyme MnmG</fullName>
    </recommendedName>
    <alternativeName>
        <fullName evidence="1">Glucose-inhibited division protein A</fullName>
    </alternativeName>
</protein>
<reference key="1">
    <citation type="journal article" date="2006" name="J. Bacteriol.">
        <title>Pathogenomic sequence analysis of Bacillus cereus and Bacillus thuringiensis isolates closely related to Bacillus anthracis.</title>
        <authorList>
            <person name="Han C.S."/>
            <person name="Xie G."/>
            <person name="Challacombe J.F."/>
            <person name="Altherr M.R."/>
            <person name="Bhotika S.S."/>
            <person name="Bruce D."/>
            <person name="Campbell C.S."/>
            <person name="Campbell M.L."/>
            <person name="Chen J."/>
            <person name="Chertkov O."/>
            <person name="Cleland C."/>
            <person name="Dimitrijevic M."/>
            <person name="Doggett N.A."/>
            <person name="Fawcett J.J."/>
            <person name="Glavina T."/>
            <person name="Goodwin L.A."/>
            <person name="Hill K.K."/>
            <person name="Hitchcock P."/>
            <person name="Jackson P.J."/>
            <person name="Keim P."/>
            <person name="Kewalramani A.R."/>
            <person name="Longmire J."/>
            <person name="Lucas S."/>
            <person name="Malfatti S."/>
            <person name="McMurry K."/>
            <person name="Meincke L.J."/>
            <person name="Misra M."/>
            <person name="Moseman B.L."/>
            <person name="Mundt M."/>
            <person name="Munk A.C."/>
            <person name="Okinaka R.T."/>
            <person name="Parson-Quintana B."/>
            <person name="Reilly L.P."/>
            <person name="Richardson P."/>
            <person name="Robinson D.L."/>
            <person name="Rubin E."/>
            <person name="Saunders E."/>
            <person name="Tapia R."/>
            <person name="Tesmer J.G."/>
            <person name="Thayer N."/>
            <person name="Thompson L.S."/>
            <person name="Tice H."/>
            <person name="Ticknor L.O."/>
            <person name="Wills P.L."/>
            <person name="Brettin T.S."/>
            <person name="Gilna P."/>
        </authorList>
    </citation>
    <scope>NUCLEOTIDE SEQUENCE [LARGE SCALE GENOMIC DNA]</scope>
    <source>
        <strain>ZK / E33L</strain>
    </source>
</reference>
<gene>
    <name evidence="1" type="primary">mnmG</name>
    <name evidence="1" type="synonym">gidA</name>
    <name type="ordered locus">BCE33L5180</name>
</gene>
<accession>Q630B9</accession>
<organism>
    <name type="scientific">Bacillus cereus (strain ZK / E33L)</name>
    <dbReference type="NCBI Taxonomy" id="288681"/>
    <lineage>
        <taxon>Bacteria</taxon>
        <taxon>Bacillati</taxon>
        <taxon>Bacillota</taxon>
        <taxon>Bacilli</taxon>
        <taxon>Bacillales</taxon>
        <taxon>Bacillaceae</taxon>
        <taxon>Bacillus</taxon>
        <taxon>Bacillus cereus group</taxon>
    </lineage>
</organism>